<evidence type="ECO:0000255" key="1">
    <source>
        <dbReference type="HAMAP-Rule" id="MF_00811"/>
    </source>
</evidence>
<name>DAPD_RHIEC</name>
<accession>Q2KD46</accession>
<reference key="1">
    <citation type="journal article" date="2006" name="Proc. Natl. Acad. Sci. U.S.A.">
        <title>The partitioned Rhizobium etli genome: genetic and metabolic redundancy in seven interacting replicons.</title>
        <authorList>
            <person name="Gonzalez V."/>
            <person name="Santamaria R.I."/>
            <person name="Bustos P."/>
            <person name="Hernandez-Gonzalez I."/>
            <person name="Medrano-Soto A."/>
            <person name="Moreno-Hagelsieb G."/>
            <person name="Janga S.C."/>
            <person name="Ramirez M.A."/>
            <person name="Jimenez-Jacinto V."/>
            <person name="Collado-Vides J."/>
            <person name="Davila G."/>
        </authorList>
    </citation>
    <scope>NUCLEOTIDE SEQUENCE [LARGE SCALE GENOMIC DNA]</scope>
    <source>
        <strain>ATCC 51251 / DSM 11541 / JCM 21823 / NBRC 15573 / CFN 42</strain>
    </source>
</reference>
<gene>
    <name evidence="1" type="primary">dapD</name>
    <name type="ordered locus">RHE_CH00418</name>
</gene>
<sequence length="286" mass="30571">MSATDLASLEKTIEAAFDNRDNVNMSTKGEVRDAVEAALNLLDEGKARVAERGADGVWTVNQWLKKAVLLSFRLNDMQVVKGGSGNSTWWDKVPSKFENWGENQFRASGFRAVPNCVVRRSAYIAPNAILMPSFVNLGAYVGEGTMVDTWATVGSCAQIGKHVHLSGGVGIGGVLEPMQAGPTIIEDNCFIGARSEVVEGCIIREGSVLGMGVYIGKSTKIVDRATGEVMYGEVPPYSVVVAGSMASANATMANGLPAPHLYCAVIVKRVDEQTRSKTGINELLRD</sequence>
<comment type="catalytic activity">
    <reaction evidence="1">
        <text>(S)-2,3,4,5-tetrahydrodipicolinate + succinyl-CoA + H2O = (S)-2-succinylamino-6-oxoheptanedioate + CoA</text>
        <dbReference type="Rhea" id="RHEA:17325"/>
        <dbReference type="ChEBI" id="CHEBI:15377"/>
        <dbReference type="ChEBI" id="CHEBI:15685"/>
        <dbReference type="ChEBI" id="CHEBI:16845"/>
        <dbReference type="ChEBI" id="CHEBI:57287"/>
        <dbReference type="ChEBI" id="CHEBI:57292"/>
        <dbReference type="EC" id="2.3.1.117"/>
    </reaction>
</comment>
<comment type="pathway">
    <text evidence="1">Amino-acid biosynthesis; L-lysine biosynthesis via DAP pathway; LL-2,6-diaminopimelate from (S)-tetrahydrodipicolinate (succinylase route): step 1/3.</text>
</comment>
<comment type="subunit">
    <text evidence="1">Homotrimer.</text>
</comment>
<comment type="subcellular location">
    <subcellularLocation>
        <location evidence="1">Cytoplasm</location>
    </subcellularLocation>
</comment>
<comment type="similarity">
    <text evidence="1">Belongs to the transferase hexapeptide repeat family.</text>
</comment>
<organism>
    <name type="scientific">Rhizobium etli (strain ATCC 51251 / DSM 11541 / JCM 21823 / NBRC 15573 / CFN 42)</name>
    <dbReference type="NCBI Taxonomy" id="347834"/>
    <lineage>
        <taxon>Bacteria</taxon>
        <taxon>Pseudomonadati</taxon>
        <taxon>Pseudomonadota</taxon>
        <taxon>Alphaproteobacteria</taxon>
        <taxon>Hyphomicrobiales</taxon>
        <taxon>Rhizobiaceae</taxon>
        <taxon>Rhizobium/Agrobacterium group</taxon>
        <taxon>Rhizobium</taxon>
    </lineage>
</organism>
<keyword id="KW-0012">Acyltransferase</keyword>
<keyword id="KW-0028">Amino-acid biosynthesis</keyword>
<keyword id="KW-0963">Cytoplasm</keyword>
<keyword id="KW-0220">Diaminopimelate biosynthesis</keyword>
<keyword id="KW-0457">Lysine biosynthesis</keyword>
<keyword id="KW-1185">Reference proteome</keyword>
<keyword id="KW-0677">Repeat</keyword>
<keyword id="KW-0808">Transferase</keyword>
<feature type="chain" id="PRO_1000047167" description="2,3,4,5-tetrahydropyridine-2,6-dicarboxylate N-succinyltransferase">
    <location>
        <begin position="1"/>
        <end position="286"/>
    </location>
</feature>
<feature type="binding site" evidence="1">
    <location>
        <position position="111"/>
    </location>
    <ligand>
        <name>substrate</name>
    </ligand>
</feature>
<feature type="binding site" evidence="1">
    <location>
        <position position="148"/>
    </location>
    <ligand>
        <name>substrate</name>
    </ligand>
</feature>
<protein>
    <recommendedName>
        <fullName evidence="1">2,3,4,5-tetrahydropyridine-2,6-dicarboxylate N-succinyltransferase</fullName>
        <ecNumber evidence="1">2.3.1.117</ecNumber>
    </recommendedName>
    <alternativeName>
        <fullName evidence="1">Tetrahydrodipicolinate N-succinyltransferase</fullName>
        <shortName evidence="1">THDP succinyltransferase</shortName>
        <shortName evidence="1">THP succinyltransferase</shortName>
        <shortName evidence="1">Tetrahydropicolinate succinylase</shortName>
    </alternativeName>
</protein>
<proteinExistence type="inferred from homology"/>
<dbReference type="EC" id="2.3.1.117" evidence="1"/>
<dbReference type="EMBL" id="CP000133">
    <property type="protein sequence ID" value="ABC89240.1"/>
    <property type="molecule type" value="Genomic_DNA"/>
</dbReference>
<dbReference type="RefSeq" id="WP_011423799.1">
    <property type="nucleotide sequence ID" value="NC_007761.1"/>
</dbReference>
<dbReference type="SMR" id="Q2KD46"/>
<dbReference type="KEGG" id="ret:RHE_CH00418"/>
<dbReference type="eggNOG" id="COG2171">
    <property type="taxonomic scope" value="Bacteria"/>
</dbReference>
<dbReference type="HOGENOM" id="CLU_050859_0_1_5"/>
<dbReference type="OrthoDB" id="9775362at2"/>
<dbReference type="UniPathway" id="UPA00034">
    <property type="reaction ID" value="UER00019"/>
</dbReference>
<dbReference type="Proteomes" id="UP000001936">
    <property type="component" value="Chromosome"/>
</dbReference>
<dbReference type="GO" id="GO:0005737">
    <property type="term" value="C:cytoplasm"/>
    <property type="evidence" value="ECO:0007669"/>
    <property type="project" value="UniProtKB-SubCell"/>
</dbReference>
<dbReference type="GO" id="GO:0008666">
    <property type="term" value="F:2,3,4,5-tetrahydropyridine-2,6-dicarboxylate N-succinyltransferase activity"/>
    <property type="evidence" value="ECO:0007669"/>
    <property type="project" value="UniProtKB-UniRule"/>
</dbReference>
<dbReference type="GO" id="GO:0019877">
    <property type="term" value="P:diaminopimelate biosynthetic process"/>
    <property type="evidence" value="ECO:0007669"/>
    <property type="project" value="UniProtKB-UniRule"/>
</dbReference>
<dbReference type="GO" id="GO:0009089">
    <property type="term" value="P:lysine biosynthetic process via diaminopimelate"/>
    <property type="evidence" value="ECO:0007669"/>
    <property type="project" value="UniProtKB-UniRule"/>
</dbReference>
<dbReference type="CDD" id="cd03350">
    <property type="entry name" value="LbH_THP_succinylT"/>
    <property type="match status" value="1"/>
</dbReference>
<dbReference type="Gene3D" id="2.160.10.10">
    <property type="entry name" value="Hexapeptide repeat proteins"/>
    <property type="match status" value="1"/>
</dbReference>
<dbReference type="Gene3D" id="1.10.166.10">
    <property type="entry name" value="Tetrahydrodipicolinate-N-succinyltransferase, N-terminal domain"/>
    <property type="match status" value="1"/>
</dbReference>
<dbReference type="HAMAP" id="MF_00811">
    <property type="entry name" value="DapD"/>
    <property type="match status" value="1"/>
</dbReference>
<dbReference type="InterPro" id="IPR005664">
    <property type="entry name" value="DapD_Trfase_Hexpep_rpt_fam"/>
</dbReference>
<dbReference type="InterPro" id="IPR001451">
    <property type="entry name" value="Hexapep"/>
</dbReference>
<dbReference type="InterPro" id="IPR018357">
    <property type="entry name" value="Hexapep_transf_CS"/>
</dbReference>
<dbReference type="InterPro" id="IPR023180">
    <property type="entry name" value="THP_succinylTrfase_dom1"/>
</dbReference>
<dbReference type="InterPro" id="IPR037133">
    <property type="entry name" value="THP_succinylTrfase_N_sf"/>
</dbReference>
<dbReference type="InterPro" id="IPR050179">
    <property type="entry name" value="Trans_hexapeptide_repeat"/>
</dbReference>
<dbReference type="InterPro" id="IPR011004">
    <property type="entry name" value="Trimer_LpxA-like_sf"/>
</dbReference>
<dbReference type="NCBIfam" id="TIGR00965">
    <property type="entry name" value="dapD"/>
    <property type="match status" value="1"/>
</dbReference>
<dbReference type="NCBIfam" id="NF008808">
    <property type="entry name" value="PRK11830.1"/>
    <property type="match status" value="1"/>
</dbReference>
<dbReference type="PANTHER" id="PTHR43300:SF10">
    <property type="entry name" value="2,3,4,5-TETRAHYDROPYRIDINE-2,6-DICARBOXYLATE N-ACETYLTRANSFERASE"/>
    <property type="match status" value="1"/>
</dbReference>
<dbReference type="PANTHER" id="PTHR43300">
    <property type="entry name" value="ACETYLTRANSFERASE"/>
    <property type="match status" value="1"/>
</dbReference>
<dbReference type="Pfam" id="PF14602">
    <property type="entry name" value="Hexapep_2"/>
    <property type="match status" value="1"/>
</dbReference>
<dbReference type="Pfam" id="PF14805">
    <property type="entry name" value="THDPS_N_2"/>
    <property type="match status" value="1"/>
</dbReference>
<dbReference type="SUPFAM" id="SSF51161">
    <property type="entry name" value="Trimeric LpxA-like enzymes"/>
    <property type="match status" value="1"/>
</dbReference>
<dbReference type="PROSITE" id="PS00101">
    <property type="entry name" value="HEXAPEP_TRANSFERASES"/>
    <property type="match status" value="1"/>
</dbReference>